<accession>P85800</accession>
<comment type="function">
    <text evidence="2 3">Thrombin inhibitor (PubMed:17684009, PubMed:22053189). Does not inhibit other serine proteases (PubMed:17684009).</text>
</comment>
<comment type="subunit">
    <text evidence="3">Interacts with human F2 (thrombin); the interaction results in thrombin inhibition.</text>
</comment>
<comment type="subcellular location">
    <subcellularLocation>
        <location evidence="2">Secreted</location>
    </subcellularLocation>
</comment>
<comment type="mass spectrometry"/>
<comment type="mass spectrometry">
    <text>Variant His-31.</text>
</comment>
<comment type="miscellaneous">
    <text evidence="3">Variegin-derived synthetic peptides show antithrombotic effects in zebrafish larvae venous thrombosis model.</text>
</comment>
<dbReference type="PDB" id="3B23">
    <property type="method" value="X-ray"/>
    <property type="resolution" value="2.40 A"/>
    <property type="chains" value="C=1-32"/>
</dbReference>
<dbReference type="PDBsum" id="3B23"/>
<dbReference type="SMR" id="P85800"/>
<dbReference type="MEROPS" id="I74.001"/>
<dbReference type="iPTMnet" id="P85800"/>
<dbReference type="GO" id="GO:0005576">
    <property type="term" value="C:extracellular region"/>
    <property type="evidence" value="ECO:0007669"/>
    <property type="project" value="UniProtKB-SubCell"/>
</dbReference>
<dbReference type="GO" id="GO:0140678">
    <property type="term" value="F:molecular function inhibitor activity"/>
    <property type="evidence" value="ECO:0000314"/>
    <property type="project" value="DisProt"/>
</dbReference>
<dbReference type="GO" id="GO:0004867">
    <property type="term" value="F:serine-type endopeptidase inhibitor activity"/>
    <property type="evidence" value="ECO:0000314"/>
    <property type="project" value="UniProtKB"/>
</dbReference>
<dbReference type="DisProt" id="DP01833"/>
<keyword id="KW-0002">3D-structure</keyword>
<keyword id="KW-0903">Direct protein sequencing</keyword>
<keyword id="KW-0325">Glycoprotein</keyword>
<keyword id="KW-0646">Protease inhibitor</keyword>
<keyword id="KW-0964">Secreted</keyword>
<keyword id="KW-0722">Serine protease inhibitor</keyword>
<proteinExistence type="evidence at protein level"/>
<sequence>SDQGDVAEPKMHKTAPPFDFEAIPEEYLDDES</sequence>
<name>VARI_AMBVA</name>
<organism>
    <name type="scientific">Amblyomma variegatum</name>
    <name type="common">Tropical bont tick</name>
    <dbReference type="NCBI Taxonomy" id="34610"/>
    <lineage>
        <taxon>Eukaryota</taxon>
        <taxon>Metazoa</taxon>
        <taxon>Ecdysozoa</taxon>
        <taxon>Arthropoda</taxon>
        <taxon>Chelicerata</taxon>
        <taxon>Arachnida</taxon>
        <taxon>Acari</taxon>
        <taxon>Parasitiformes</taxon>
        <taxon>Ixodida</taxon>
        <taxon>Ixodoidea</taxon>
        <taxon>Ixodidae</taxon>
        <taxon>Amblyomminae</taxon>
        <taxon>Amblyomma</taxon>
    </lineage>
</organism>
<feature type="peptide" id="PRO_0000341476" description="Variegin" evidence="2">
    <location>
        <begin position="1"/>
        <end position="32"/>
    </location>
</feature>
<feature type="region of interest" description="Disordered" evidence="1">
    <location>
        <begin position="1"/>
        <end position="32"/>
    </location>
</feature>
<feature type="region of interest" description="Contains the active site" evidence="2">
    <location>
        <begin position="8"/>
        <end position="14"/>
    </location>
</feature>
<feature type="compositionally biased region" description="Acidic residues" evidence="1">
    <location>
        <begin position="22"/>
        <end position="32"/>
    </location>
</feature>
<feature type="glycosylation site" description="O-linked (Hex) threonine" evidence="2">
    <location>
        <position position="14"/>
    </location>
</feature>
<feature type="sequence variant" evidence="2">
    <original>E</original>
    <variation>H</variation>
    <location>
        <position position="31"/>
    </location>
</feature>
<reference evidence="4" key="1">
    <citation type="journal article" date="2007" name="J. Biol. Chem.">
        <title>Variegin, a novel fast and tight binding thrombin inhibitor from the tropical bont tick.</title>
        <authorList>
            <person name="Koh C.Y."/>
            <person name="Kazimirova M."/>
            <person name="Trimnell A."/>
            <person name="Takac P."/>
            <person name="Labuda M."/>
            <person name="Nuttall P.A."/>
            <person name="Kini R.M."/>
        </authorList>
    </citation>
    <scope>PROTEIN SEQUENCE</scope>
    <scope>FUNCTION</scope>
    <scope>SUBCELLULAR LOCATION</scope>
    <scope>MASS SPECTROMETRY</scope>
    <scope>GLYCOSYLATION AT THR-14</scope>
    <scope>VARIANT HIS-31</scope>
    <source>
        <tissue evidence="2">Salivary gland</tissue>
    </source>
</reference>
<reference evidence="5" key="2">
    <citation type="journal article" date="2011" name="PLoS ONE">
        <title>Crystal structure of thrombin in complex with S-variegin: insights of a novel mechanism of inhibition and design of tunable thrombin inhibitors.</title>
        <authorList>
            <person name="Koh C.Y."/>
            <person name="Kumar S."/>
            <person name="Kazimirova M."/>
            <person name="Nuttall P.A."/>
            <person name="Radhakrishnan U.P."/>
            <person name="Kim S."/>
            <person name="Jagadeeswaran P."/>
            <person name="Imamura T."/>
            <person name="Mizuguchi J."/>
            <person name="Iwanaga S."/>
            <person name="Swaminathan K."/>
            <person name="Kini R.M."/>
        </authorList>
    </citation>
    <scope>X-RAY CRYSTALLOGRAPHY (2.4 ANGSTROMS) OF 1-32 IN COMPLEX WITH THROMBIN</scope>
    <scope>FUNCTION</scope>
    <scope>INTERACTION WITH HOST F2</scope>
</reference>
<evidence type="ECO:0000256" key="1">
    <source>
        <dbReference type="SAM" id="MobiDB-lite"/>
    </source>
</evidence>
<evidence type="ECO:0000269" key="2">
    <source>
    </source>
</evidence>
<evidence type="ECO:0000269" key="3">
    <source>
    </source>
</evidence>
<evidence type="ECO:0000305" key="4"/>
<evidence type="ECO:0007744" key="5">
    <source>
        <dbReference type="PDB" id="3B23"/>
    </source>
</evidence>
<protein>
    <recommendedName>
        <fullName>Variegin</fullName>
    </recommendedName>
</protein>